<name>SUCC_SULNB</name>
<organism>
    <name type="scientific">Sulfurovum sp. (strain NBC37-1)</name>
    <dbReference type="NCBI Taxonomy" id="387093"/>
    <lineage>
        <taxon>Bacteria</taxon>
        <taxon>Pseudomonadati</taxon>
        <taxon>Campylobacterota</taxon>
        <taxon>Epsilonproteobacteria</taxon>
        <taxon>Campylobacterales</taxon>
        <taxon>Sulfurovaceae</taxon>
        <taxon>Sulfurovum</taxon>
    </lineage>
</organism>
<dbReference type="EC" id="6.2.1.5" evidence="1"/>
<dbReference type="EMBL" id="AP009179">
    <property type="protein sequence ID" value="BAF71536.1"/>
    <property type="molecule type" value="Genomic_DNA"/>
</dbReference>
<dbReference type="RefSeq" id="WP_011980269.1">
    <property type="nucleotide sequence ID" value="NC_009663.1"/>
</dbReference>
<dbReference type="SMR" id="A6Q7S7"/>
<dbReference type="STRING" id="387093.SUN_0576"/>
<dbReference type="KEGG" id="sun:SUN_0576"/>
<dbReference type="eggNOG" id="COG0045">
    <property type="taxonomic scope" value="Bacteria"/>
</dbReference>
<dbReference type="HOGENOM" id="CLU_037430_0_2_7"/>
<dbReference type="OrthoDB" id="9802602at2"/>
<dbReference type="UniPathway" id="UPA00223">
    <property type="reaction ID" value="UER00999"/>
</dbReference>
<dbReference type="Proteomes" id="UP000006378">
    <property type="component" value="Chromosome"/>
</dbReference>
<dbReference type="GO" id="GO:0005829">
    <property type="term" value="C:cytosol"/>
    <property type="evidence" value="ECO:0007669"/>
    <property type="project" value="TreeGrafter"/>
</dbReference>
<dbReference type="GO" id="GO:0042709">
    <property type="term" value="C:succinate-CoA ligase complex"/>
    <property type="evidence" value="ECO:0007669"/>
    <property type="project" value="TreeGrafter"/>
</dbReference>
<dbReference type="GO" id="GO:0005524">
    <property type="term" value="F:ATP binding"/>
    <property type="evidence" value="ECO:0007669"/>
    <property type="project" value="UniProtKB-UniRule"/>
</dbReference>
<dbReference type="GO" id="GO:0000287">
    <property type="term" value="F:magnesium ion binding"/>
    <property type="evidence" value="ECO:0007669"/>
    <property type="project" value="UniProtKB-UniRule"/>
</dbReference>
<dbReference type="GO" id="GO:0004775">
    <property type="term" value="F:succinate-CoA ligase (ADP-forming) activity"/>
    <property type="evidence" value="ECO:0007669"/>
    <property type="project" value="UniProtKB-UniRule"/>
</dbReference>
<dbReference type="GO" id="GO:0004776">
    <property type="term" value="F:succinate-CoA ligase (GDP-forming) activity"/>
    <property type="evidence" value="ECO:0007669"/>
    <property type="project" value="RHEA"/>
</dbReference>
<dbReference type="GO" id="GO:0006104">
    <property type="term" value="P:succinyl-CoA metabolic process"/>
    <property type="evidence" value="ECO:0007669"/>
    <property type="project" value="TreeGrafter"/>
</dbReference>
<dbReference type="GO" id="GO:0006099">
    <property type="term" value="P:tricarboxylic acid cycle"/>
    <property type="evidence" value="ECO:0007669"/>
    <property type="project" value="UniProtKB-UniRule"/>
</dbReference>
<dbReference type="FunFam" id="3.30.1490.20:FF:000002">
    <property type="entry name" value="Succinate--CoA ligase [ADP-forming] subunit beta"/>
    <property type="match status" value="1"/>
</dbReference>
<dbReference type="FunFam" id="3.30.470.20:FF:000002">
    <property type="entry name" value="Succinate--CoA ligase [ADP-forming] subunit beta"/>
    <property type="match status" value="1"/>
</dbReference>
<dbReference type="FunFam" id="3.40.50.261:FF:000001">
    <property type="entry name" value="Succinate--CoA ligase [ADP-forming] subunit beta"/>
    <property type="match status" value="1"/>
</dbReference>
<dbReference type="Gene3D" id="3.30.1490.20">
    <property type="entry name" value="ATP-grasp fold, A domain"/>
    <property type="match status" value="1"/>
</dbReference>
<dbReference type="Gene3D" id="3.30.470.20">
    <property type="entry name" value="ATP-grasp fold, B domain"/>
    <property type="match status" value="1"/>
</dbReference>
<dbReference type="Gene3D" id="3.40.50.261">
    <property type="entry name" value="Succinyl-CoA synthetase domains"/>
    <property type="match status" value="1"/>
</dbReference>
<dbReference type="HAMAP" id="MF_00558">
    <property type="entry name" value="Succ_CoA_beta"/>
    <property type="match status" value="1"/>
</dbReference>
<dbReference type="InterPro" id="IPR011761">
    <property type="entry name" value="ATP-grasp"/>
</dbReference>
<dbReference type="InterPro" id="IPR013650">
    <property type="entry name" value="ATP-grasp_succ-CoA_synth-type"/>
</dbReference>
<dbReference type="InterPro" id="IPR013815">
    <property type="entry name" value="ATP_grasp_subdomain_1"/>
</dbReference>
<dbReference type="InterPro" id="IPR017866">
    <property type="entry name" value="Succ-CoA_synthase_bsu_CS"/>
</dbReference>
<dbReference type="InterPro" id="IPR005811">
    <property type="entry name" value="SUCC_ACL_C"/>
</dbReference>
<dbReference type="InterPro" id="IPR005809">
    <property type="entry name" value="Succ_CoA_ligase-like_bsu"/>
</dbReference>
<dbReference type="InterPro" id="IPR016102">
    <property type="entry name" value="Succinyl-CoA_synth-like"/>
</dbReference>
<dbReference type="NCBIfam" id="NF001913">
    <property type="entry name" value="PRK00696.1"/>
    <property type="match status" value="1"/>
</dbReference>
<dbReference type="NCBIfam" id="TIGR01016">
    <property type="entry name" value="sucCoAbeta"/>
    <property type="match status" value="1"/>
</dbReference>
<dbReference type="PANTHER" id="PTHR11815:SF10">
    <property type="entry name" value="SUCCINATE--COA LIGASE [GDP-FORMING] SUBUNIT BETA, MITOCHONDRIAL"/>
    <property type="match status" value="1"/>
</dbReference>
<dbReference type="PANTHER" id="PTHR11815">
    <property type="entry name" value="SUCCINYL-COA SYNTHETASE BETA CHAIN"/>
    <property type="match status" value="1"/>
</dbReference>
<dbReference type="Pfam" id="PF08442">
    <property type="entry name" value="ATP-grasp_2"/>
    <property type="match status" value="1"/>
</dbReference>
<dbReference type="Pfam" id="PF00549">
    <property type="entry name" value="Ligase_CoA"/>
    <property type="match status" value="1"/>
</dbReference>
<dbReference type="PIRSF" id="PIRSF001554">
    <property type="entry name" value="SucCS_beta"/>
    <property type="match status" value="1"/>
</dbReference>
<dbReference type="SUPFAM" id="SSF56059">
    <property type="entry name" value="Glutathione synthetase ATP-binding domain-like"/>
    <property type="match status" value="1"/>
</dbReference>
<dbReference type="SUPFAM" id="SSF52210">
    <property type="entry name" value="Succinyl-CoA synthetase domains"/>
    <property type="match status" value="1"/>
</dbReference>
<dbReference type="PROSITE" id="PS50975">
    <property type="entry name" value="ATP_GRASP"/>
    <property type="match status" value="1"/>
</dbReference>
<dbReference type="PROSITE" id="PS01217">
    <property type="entry name" value="SUCCINYL_COA_LIG_3"/>
    <property type="match status" value="1"/>
</dbReference>
<reference key="1">
    <citation type="journal article" date="2007" name="Proc. Natl. Acad. Sci. U.S.A.">
        <title>Deep-sea vent epsilon-proteobacterial genomes provide insights into emergence of pathogens.</title>
        <authorList>
            <person name="Nakagawa S."/>
            <person name="Takaki Y."/>
            <person name="Shimamura S."/>
            <person name="Reysenbach A.-L."/>
            <person name="Takai K."/>
            <person name="Horikoshi K."/>
        </authorList>
    </citation>
    <scope>NUCLEOTIDE SEQUENCE [LARGE SCALE GENOMIC DNA]</scope>
    <source>
        <strain>NBC37-1</strain>
    </source>
</reference>
<accession>A6Q7S7</accession>
<proteinExistence type="inferred from homology"/>
<feature type="chain" id="PRO_1000082251" description="Succinate--CoA ligase [ADP-forming] subunit beta">
    <location>
        <begin position="1"/>
        <end position="391"/>
    </location>
</feature>
<feature type="domain" description="ATP-grasp" evidence="1">
    <location>
        <begin position="9"/>
        <end position="245"/>
    </location>
</feature>
<feature type="binding site" evidence="1">
    <location>
        <position position="46"/>
    </location>
    <ligand>
        <name>ATP</name>
        <dbReference type="ChEBI" id="CHEBI:30616"/>
    </ligand>
</feature>
<feature type="binding site" evidence="1">
    <location>
        <begin position="53"/>
        <end position="55"/>
    </location>
    <ligand>
        <name>ATP</name>
        <dbReference type="ChEBI" id="CHEBI:30616"/>
    </ligand>
</feature>
<feature type="binding site" evidence="1">
    <location>
        <position position="99"/>
    </location>
    <ligand>
        <name>ATP</name>
        <dbReference type="ChEBI" id="CHEBI:30616"/>
    </ligand>
</feature>
<feature type="binding site" evidence="1">
    <location>
        <position position="102"/>
    </location>
    <ligand>
        <name>ATP</name>
        <dbReference type="ChEBI" id="CHEBI:30616"/>
    </ligand>
</feature>
<feature type="binding site" evidence="1">
    <location>
        <position position="107"/>
    </location>
    <ligand>
        <name>ATP</name>
        <dbReference type="ChEBI" id="CHEBI:30616"/>
    </ligand>
</feature>
<feature type="binding site" evidence="1">
    <location>
        <position position="200"/>
    </location>
    <ligand>
        <name>Mg(2+)</name>
        <dbReference type="ChEBI" id="CHEBI:18420"/>
    </ligand>
</feature>
<feature type="binding site" evidence="1">
    <location>
        <position position="214"/>
    </location>
    <ligand>
        <name>Mg(2+)</name>
        <dbReference type="ChEBI" id="CHEBI:18420"/>
    </ligand>
</feature>
<feature type="binding site" evidence="1">
    <location>
        <position position="265"/>
    </location>
    <ligand>
        <name>substrate</name>
        <note>ligand shared with subunit alpha</note>
    </ligand>
</feature>
<feature type="binding site" evidence="1">
    <location>
        <begin position="322"/>
        <end position="324"/>
    </location>
    <ligand>
        <name>substrate</name>
        <note>ligand shared with subunit alpha</note>
    </ligand>
</feature>
<comment type="function">
    <text evidence="1">Succinyl-CoA synthetase functions in the citric acid cycle (TCA), coupling the hydrolysis of succinyl-CoA to the synthesis of either ATP or GTP and thus represents the only step of substrate-level phosphorylation in the TCA. The beta subunit provides nucleotide specificity of the enzyme and binds the substrate succinate, while the binding sites for coenzyme A and phosphate are found in the alpha subunit.</text>
</comment>
<comment type="catalytic activity">
    <reaction evidence="1">
        <text>succinate + ATP + CoA = succinyl-CoA + ADP + phosphate</text>
        <dbReference type="Rhea" id="RHEA:17661"/>
        <dbReference type="ChEBI" id="CHEBI:30031"/>
        <dbReference type="ChEBI" id="CHEBI:30616"/>
        <dbReference type="ChEBI" id="CHEBI:43474"/>
        <dbReference type="ChEBI" id="CHEBI:57287"/>
        <dbReference type="ChEBI" id="CHEBI:57292"/>
        <dbReference type="ChEBI" id="CHEBI:456216"/>
        <dbReference type="EC" id="6.2.1.5"/>
    </reaction>
    <physiologicalReaction direction="right-to-left" evidence="1">
        <dbReference type="Rhea" id="RHEA:17663"/>
    </physiologicalReaction>
</comment>
<comment type="catalytic activity">
    <reaction evidence="1">
        <text>GTP + succinate + CoA = succinyl-CoA + GDP + phosphate</text>
        <dbReference type="Rhea" id="RHEA:22120"/>
        <dbReference type="ChEBI" id="CHEBI:30031"/>
        <dbReference type="ChEBI" id="CHEBI:37565"/>
        <dbReference type="ChEBI" id="CHEBI:43474"/>
        <dbReference type="ChEBI" id="CHEBI:57287"/>
        <dbReference type="ChEBI" id="CHEBI:57292"/>
        <dbReference type="ChEBI" id="CHEBI:58189"/>
    </reaction>
    <physiologicalReaction direction="right-to-left" evidence="1">
        <dbReference type="Rhea" id="RHEA:22122"/>
    </physiologicalReaction>
</comment>
<comment type="cofactor">
    <cofactor evidence="1">
        <name>Mg(2+)</name>
        <dbReference type="ChEBI" id="CHEBI:18420"/>
    </cofactor>
    <text evidence="1">Binds 1 Mg(2+) ion per subunit.</text>
</comment>
<comment type="pathway">
    <text evidence="1">Carbohydrate metabolism; tricarboxylic acid cycle; succinate from succinyl-CoA (ligase route): step 1/1.</text>
</comment>
<comment type="subunit">
    <text evidence="1">Heterotetramer of two alpha and two beta subunits.</text>
</comment>
<comment type="similarity">
    <text evidence="1">Belongs to the succinate/malate CoA ligase beta subunit family.</text>
</comment>
<protein>
    <recommendedName>
        <fullName evidence="1">Succinate--CoA ligase [ADP-forming] subunit beta</fullName>
        <ecNumber evidence="1">6.2.1.5</ecNumber>
    </recommendedName>
    <alternativeName>
        <fullName evidence="1">Succinyl-CoA synthetase subunit beta</fullName>
        <shortName evidence="1">SCS-beta</shortName>
    </alternativeName>
</protein>
<sequence>MNVHEYQAKQIFAEYGVPTPKGIMAESVDAAVEAAKELGGPIWVVKAQIHAGGRGLGGGVKLAKSLDEVRELADEILGMTLVTHQTGPEGKLVQKLYIEDGADIKDEFYLSVILDRKLEMPLIMASTEGGMNIEDVAENTPEKIITVPVDPTIGFQGFHGRELAFGLGITDKAEQKNIITFAQKLYKLYMDKDAEMIEINPLVRTGSGEFLALDGKMGFDNSALYRQPEIAAMRDLSEEDPDEVEAAKYGLSYVALDGEIGCMVNGAGLAMGTMDTINHMGGTPANFLDVGGSANAETVAKGFEIILKNPNVKAIFVNIFGGIVRCDRIANGIIEATKITDVHVPVIVRLDGTNAPEAAEILKNANISNLIVAEDLGDGAAKAVAAAKGEI</sequence>
<gene>
    <name evidence="1" type="primary">sucC</name>
    <name type="ordered locus">SUN_0576</name>
</gene>
<keyword id="KW-0067">ATP-binding</keyword>
<keyword id="KW-0436">Ligase</keyword>
<keyword id="KW-0460">Magnesium</keyword>
<keyword id="KW-0479">Metal-binding</keyword>
<keyword id="KW-0547">Nucleotide-binding</keyword>
<keyword id="KW-0816">Tricarboxylic acid cycle</keyword>
<evidence type="ECO:0000255" key="1">
    <source>
        <dbReference type="HAMAP-Rule" id="MF_00558"/>
    </source>
</evidence>